<comment type="function">
    <text>The alpha subunit is responsible for the aldol cleavage of indoleglycerol phosphate to indole and glyceraldehyde 3-phosphate.</text>
</comment>
<comment type="catalytic activity">
    <reaction evidence="1">
        <text>(1S,2R)-1-C-(indol-3-yl)glycerol 3-phosphate + L-serine = D-glyceraldehyde 3-phosphate + L-tryptophan + H2O</text>
        <dbReference type="Rhea" id="RHEA:10532"/>
        <dbReference type="ChEBI" id="CHEBI:15377"/>
        <dbReference type="ChEBI" id="CHEBI:33384"/>
        <dbReference type="ChEBI" id="CHEBI:57912"/>
        <dbReference type="ChEBI" id="CHEBI:58866"/>
        <dbReference type="ChEBI" id="CHEBI:59776"/>
        <dbReference type="EC" id="4.2.1.20"/>
    </reaction>
</comment>
<comment type="pathway">
    <text evidence="1">Amino-acid biosynthesis; L-tryptophan biosynthesis; L-tryptophan from chorismate: step 5/5.</text>
</comment>
<comment type="subunit">
    <text evidence="1">Tetramer of two alpha and two beta chains.</text>
</comment>
<comment type="subcellular location">
    <subcellularLocation>
        <location>Plastid</location>
        <location>Chloroplast</location>
    </subcellularLocation>
</comment>
<comment type="similarity">
    <text evidence="1">Belongs to the TrpA family.</text>
</comment>
<name>TRPA2_CYACA</name>
<protein>
    <recommendedName>
        <fullName evidence="1">Tryptophan synthase alpha chain</fullName>
        <ecNumber evidence="1">4.2.1.20</ecNumber>
    </recommendedName>
</protein>
<evidence type="ECO:0000255" key="1">
    <source>
        <dbReference type="HAMAP-Rule" id="MF_00131"/>
    </source>
</evidence>
<evidence type="ECO:0000305" key="2"/>
<geneLocation type="chloroplast"/>
<reference key="1">
    <citation type="journal article" date="1994" name="Curr. Genet.">
        <title>The trpA gene on the plastid genome of Cyanidium caldarium strain RK-1.</title>
        <authorList>
            <person name="Ohta N."/>
            <person name="Sato N."/>
            <person name="Kawano S."/>
            <person name="Kuroiwa T."/>
        </authorList>
    </citation>
    <scope>NUCLEOTIDE SEQUENCE [GENOMIC DNA]</scope>
    <source>
        <strain>RK-1</strain>
    </source>
</reference>
<reference key="2">
    <citation type="journal article" date="1997" name="J. Plant Res.">
        <title>Analysis of a plastid gene cluster reveals a close relationship between Cyanidioschyzon and Cyanidium.</title>
        <authorList>
            <person name="Ohta N."/>
        </authorList>
    </citation>
    <scope>NUCLEOTIDE SEQUENCE [GENOMIC DNA]</scope>
    <source>
        <strain>RK-1</strain>
    </source>
</reference>
<feature type="chain" id="PRO_0000098904" description="Tryptophan synthase alpha chain">
    <location>
        <begin position="1"/>
        <end position="242"/>
    </location>
</feature>
<feature type="active site" description="Proton acceptor" evidence="1">
    <location>
        <position position="32"/>
    </location>
</feature>
<feature type="active site" description="Proton acceptor" evidence="1">
    <location>
        <position position="43"/>
    </location>
</feature>
<feature type="sequence conflict" description="In Ref. 1; BAA04617." evidence="2" ref="1">
    <original>R</original>
    <variation>G</variation>
    <location>
        <position position="58"/>
    </location>
</feature>
<feature type="sequence conflict" description="In Ref. 1; BAA04617." evidence="2" ref="1">
    <original>T</original>
    <variation>L</variation>
    <location>
        <position position="138"/>
    </location>
</feature>
<proteinExistence type="inferred from homology"/>
<dbReference type="EC" id="4.2.1.20" evidence="1"/>
<dbReference type="EMBL" id="D17791">
    <property type="protein sequence ID" value="BAA04617.1"/>
    <property type="molecule type" value="Genomic_DNA"/>
</dbReference>
<dbReference type="EMBL" id="D63676">
    <property type="protein sequence ID" value="BAA22823.1"/>
    <property type="molecule type" value="Genomic_DNA"/>
</dbReference>
<dbReference type="PIR" id="S41995">
    <property type="entry name" value="S41995"/>
</dbReference>
<dbReference type="PIR" id="T14365">
    <property type="entry name" value="T14365"/>
</dbReference>
<dbReference type="SMR" id="P34793"/>
<dbReference type="UniPathway" id="UPA00035">
    <property type="reaction ID" value="UER00044"/>
</dbReference>
<dbReference type="GO" id="GO:0009507">
    <property type="term" value="C:chloroplast"/>
    <property type="evidence" value="ECO:0007669"/>
    <property type="project" value="UniProtKB-SubCell"/>
</dbReference>
<dbReference type="GO" id="GO:0005829">
    <property type="term" value="C:cytosol"/>
    <property type="evidence" value="ECO:0007669"/>
    <property type="project" value="TreeGrafter"/>
</dbReference>
<dbReference type="GO" id="GO:0004834">
    <property type="term" value="F:tryptophan synthase activity"/>
    <property type="evidence" value="ECO:0007669"/>
    <property type="project" value="UniProtKB-UniRule"/>
</dbReference>
<dbReference type="CDD" id="cd04724">
    <property type="entry name" value="Tryptophan_synthase_alpha"/>
    <property type="match status" value="1"/>
</dbReference>
<dbReference type="Gene3D" id="3.20.20.70">
    <property type="entry name" value="Aldolase class I"/>
    <property type="match status" value="1"/>
</dbReference>
<dbReference type="HAMAP" id="MF_00131">
    <property type="entry name" value="Trp_synth_alpha"/>
    <property type="match status" value="1"/>
</dbReference>
<dbReference type="InterPro" id="IPR013785">
    <property type="entry name" value="Aldolase_TIM"/>
</dbReference>
<dbReference type="InterPro" id="IPR011060">
    <property type="entry name" value="RibuloseP-bd_barrel"/>
</dbReference>
<dbReference type="InterPro" id="IPR018204">
    <property type="entry name" value="Trp_synthase_alpha_AS"/>
</dbReference>
<dbReference type="InterPro" id="IPR002028">
    <property type="entry name" value="Trp_synthase_suA"/>
</dbReference>
<dbReference type="NCBIfam" id="TIGR00262">
    <property type="entry name" value="trpA"/>
    <property type="match status" value="1"/>
</dbReference>
<dbReference type="PANTHER" id="PTHR43406:SF1">
    <property type="entry name" value="TRYPTOPHAN SYNTHASE ALPHA CHAIN, CHLOROPLASTIC"/>
    <property type="match status" value="1"/>
</dbReference>
<dbReference type="PANTHER" id="PTHR43406">
    <property type="entry name" value="TRYPTOPHAN SYNTHASE, ALPHA CHAIN"/>
    <property type="match status" value="1"/>
</dbReference>
<dbReference type="Pfam" id="PF00290">
    <property type="entry name" value="Trp_syntA"/>
    <property type="match status" value="1"/>
</dbReference>
<dbReference type="SUPFAM" id="SSF51366">
    <property type="entry name" value="Ribulose-phoshate binding barrel"/>
    <property type="match status" value="1"/>
</dbReference>
<dbReference type="PROSITE" id="PS00167">
    <property type="entry name" value="TRP_SYNTHASE_ALPHA"/>
    <property type="match status" value="1"/>
</dbReference>
<gene>
    <name evidence="1" type="primary">trpA</name>
</gene>
<organism>
    <name type="scientific">Cyanidium caldarium</name>
    <name type="common">Red alga</name>
    <dbReference type="NCBI Taxonomy" id="2771"/>
    <lineage>
        <taxon>Eukaryota</taxon>
        <taxon>Rhodophyta</taxon>
        <taxon>Bangiophyceae</taxon>
        <taxon>Cyanidiales</taxon>
        <taxon>Cyanidiaceae</taxon>
        <taxon>Cyanidium</taxon>
    </lineage>
</organism>
<accession>P34793</accession>
<accession>O22027</accession>
<keyword id="KW-0028">Amino-acid biosynthesis</keyword>
<keyword id="KW-0057">Aromatic amino acid biosynthesis</keyword>
<keyword id="KW-0150">Chloroplast</keyword>
<keyword id="KW-0456">Lyase</keyword>
<keyword id="KW-0934">Plastid</keyword>
<keyword id="KW-0822">Tryptophan biosynthesis</keyword>
<sequence length="242" mass="26894">MFIAYLTAGAPDLNTTKQALLNLANDGADVIEIGVPYSDPLADGMILQKASQQALKNRFRLEQLWHLLAEIELPVPVVILAYYNQIFHYGVEKWVTTLVNLKVKALIVPDLPYEEAAILRAACARHHLHMIWLISPTTPKVRAKQLALACDDWIYLVSRTGVTGVDAHFDNQIPNMIAELKQVTTTPIALGFGIHQKQQLQLVKSWGADGVIIGTACMQILLEKGVDQLTEWISAMKKSSYP</sequence>